<evidence type="ECO:0000255" key="1">
    <source>
        <dbReference type="HAMAP-Rule" id="MF_00379"/>
    </source>
</evidence>
<keyword id="KW-0963">Cytoplasm</keyword>
<keyword id="KW-0342">GTP-binding</keyword>
<keyword id="KW-0378">Hydrolase</keyword>
<keyword id="KW-0460">Magnesium</keyword>
<keyword id="KW-0479">Metal-binding</keyword>
<keyword id="KW-0547">Nucleotide-binding</keyword>
<keyword id="KW-0630">Potassium</keyword>
<keyword id="KW-0819">tRNA processing</keyword>
<proteinExistence type="inferred from homology"/>
<accession>B1JRQ1</accession>
<protein>
    <recommendedName>
        <fullName evidence="1">tRNA modification GTPase MnmE</fullName>
        <ecNumber evidence="1">3.6.-.-</ecNumber>
    </recommendedName>
</protein>
<dbReference type="EC" id="3.6.-.-" evidence="1"/>
<dbReference type="EMBL" id="CP000950">
    <property type="protein sequence ID" value="ACA70501.1"/>
    <property type="molecule type" value="Genomic_DNA"/>
</dbReference>
<dbReference type="RefSeq" id="WP_012304789.1">
    <property type="nucleotide sequence ID" value="NZ_CP009792.1"/>
</dbReference>
<dbReference type="SMR" id="B1JRQ1"/>
<dbReference type="KEGG" id="ypy:YPK_4245"/>
<dbReference type="PATRIC" id="fig|502800.11.peg.596"/>
<dbReference type="GO" id="GO:0005829">
    <property type="term" value="C:cytosol"/>
    <property type="evidence" value="ECO:0007669"/>
    <property type="project" value="TreeGrafter"/>
</dbReference>
<dbReference type="GO" id="GO:0005525">
    <property type="term" value="F:GTP binding"/>
    <property type="evidence" value="ECO:0007669"/>
    <property type="project" value="UniProtKB-UniRule"/>
</dbReference>
<dbReference type="GO" id="GO:0003924">
    <property type="term" value="F:GTPase activity"/>
    <property type="evidence" value="ECO:0007669"/>
    <property type="project" value="UniProtKB-UniRule"/>
</dbReference>
<dbReference type="GO" id="GO:0046872">
    <property type="term" value="F:metal ion binding"/>
    <property type="evidence" value="ECO:0007669"/>
    <property type="project" value="UniProtKB-KW"/>
</dbReference>
<dbReference type="GO" id="GO:0030488">
    <property type="term" value="P:tRNA methylation"/>
    <property type="evidence" value="ECO:0007669"/>
    <property type="project" value="TreeGrafter"/>
</dbReference>
<dbReference type="GO" id="GO:0002098">
    <property type="term" value="P:tRNA wobble uridine modification"/>
    <property type="evidence" value="ECO:0007669"/>
    <property type="project" value="TreeGrafter"/>
</dbReference>
<dbReference type="CDD" id="cd04164">
    <property type="entry name" value="trmE"/>
    <property type="match status" value="1"/>
</dbReference>
<dbReference type="CDD" id="cd14858">
    <property type="entry name" value="TrmE_N"/>
    <property type="match status" value="1"/>
</dbReference>
<dbReference type="FunFam" id="3.30.1360.120:FF:000001">
    <property type="entry name" value="tRNA modification GTPase MnmE"/>
    <property type="match status" value="1"/>
</dbReference>
<dbReference type="FunFam" id="3.40.50.300:FF:000249">
    <property type="entry name" value="tRNA modification GTPase MnmE"/>
    <property type="match status" value="1"/>
</dbReference>
<dbReference type="Gene3D" id="3.40.50.300">
    <property type="entry name" value="P-loop containing nucleotide triphosphate hydrolases"/>
    <property type="match status" value="1"/>
</dbReference>
<dbReference type="Gene3D" id="3.30.1360.120">
    <property type="entry name" value="Probable tRNA modification gtpase trme, domain 1"/>
    <property type="match status" value="1"/>
</dbReference>
<dbReference type="Gene3D" id="1.20.120.430">
    <property type="entry name" value="tRNA modification GTPase MnmE domain 2"/>
    <property type="match status" value="1"/>
</dbReference>
<dbReference type="HAMAP" id="MF_00379">
    <property type="entry name" value="GTPase_MnmE"/>
    <property type="match status" value="1"/>
</dbReference>
<dbReference type="InterPro" id="IPR031168">
    <property type="entry name" value="G_TrmE"/>
</dbReference>
<dbReference type="InterPro" id="IPR006073">
    <property type="entry name" value="GTP-bd"/>
</dbReference>
<dbReference type="InterPro" id="IPR018948">
    <property type="entry name" value="GTP-bd_TrmE_N"/>
</dbReference>
<dbReference type="InterPro" id="IPR004520">
    <property type="entry name" value="GTPase_MnmE"/>
</dbReference>
<dbReference type="InterPro" id="IPR027368">
    <property type="entry name" value="MnmE_dom2"/>
</dbReference>
<dbReference type="InterPro" id="IPR025867">
    <property type="entry name" value="MnmE_helical"/>
</dbReference>
<dbReference type="InterPro" id="IPR027417">
    <property type="entry name" value="P-loop_NTPase"/>
</dbReference>
<dbReference type="InterPro" id="IPR005225">
    <property type="entry name" value="Small_GTP-bd"/>
</dbReference>
<dbReference type="InterPro" id="IPR027266">
    <property type="entry name" value="TrmE/GcvT_dom1"/>
</dbReference>
<dbReference type="NCBIfam" id="TIGR00450">
    <property type="entry name" value="mnmE_trmE_thdF"/>
    <property type="match status" value="1"/>
</dbReference>
<dbReference type="NCBIfam" id="NF003661">
    <property type="entry name" value="PRK05291.1-3"/>
    <property type="match status" value="1"/>
</dbReference>
<dbReference type="NCBIfam" id="TIGR00231">
    <property type="entry name" value="small_GTP"/>
    <property type="match status" value="1"/>
</dbReference>
<dbReference type="PANTHER" id="PTHR42714">
    <property type="entry name" value="TRNA MODIFICATION GTPASE GTPBP3"/>
    <property type="match status" value="1"/>
</dbReference>
<dbReference type="PANTHER" id="PTHR42714:SF2">
    <property type="entry name" value="TRNA MODIFICATION GTPASE GTPBP3, MITOCHONDRIAL"/>
    <property type="match status" value="1"/>
</dbReference>
<dbReference type="Pfam" id="PF01926">
    <property type="entry name" value="MMR_HSR1"/>
    <property type="match status" value="1"/>
</dbReference>
<dbReference type="Pfam" id="PF12631">
    <property type="entry name" value="MnmE_helical"/>
    <property type="match status" value="1"/>
</dbReference>
<dbReference type="Pfam" id="PF10396">
    <property type="entry name" value="TrmE_N"/>
    <property type="match status" value="1"/>
</dbReference>
<dbReference type="SUPFAM" id="SSF52540">
    <property type="entry name" value="P-loop containing nucleoside triphosphate hydrolases"/>
    <property type="match status" value="1"/>
</dbReference>
<dbReference type="SUPFAM" id="SSF116878">
    <property type="entry name" value="TrmE connector domain"/>
    <property type="match status" value="1"/>
</dbReference>
<dbReference type="PROSITE" id="PS51709">
    <property type="entry name" value="G_TRME"/>
    <property type="match status" value="1"/>
</dbReference>
<gene>
    <name evidence="1" type="primary">mnmE</name>
    <name evidence="1" type="synonym">trmE</name>
    <name type="ordered locus">YPK_4245</name>
</gene>
<organism>
    <name type="scientific">Yersinia pseudotuberculosis serotype O:3 (strain YPIII)</name>
    <dbReference type="NCBI Taxonomy" id="502800"/>
    <lineage>
        <taxon>Bacteria</taxon>
        <taxon>Pseudomonadati</taxon>
        <taxon>Pseudomonadota</taxon>
        <taxon>Gammaproteobacteria</taxon>
        <taxon>Enterobacterales</taxon>
        <taxon>Yersiniaceae</taxon>
        <taxon>Yersinia</taxon>
    </lineage>
</organism>
<reference key="1">
    <citation type="submission" date="2008-02" db="EMBL/GenBank/DDBJ databases">
        <title>Complete sequence of Yersinia pseudotuberculosis YPIII.</title>
        <authorList>
            <consortium name="US DOE Joint Genome Institute"/>
            <person name="Copeland A."/>
            <person name="Lucas S."/>
            <person name="Lapidus A."/>
            <person name="Glavina del Rio T."/>
            <person name="Dalin E."/>
            <person name="Tice H."/>
            <person name="Bruce D."/>
            <person name="Goodwin L."/>
            <person name="Pitluck S."/>
            <person name="Munk A.C."/>
            <person name="Brettin T."/>
            <person name="Detter J.C."/>
            <person name="Han C."/>
            <person name="Tapia R."/>
            <person name="Schmutz J."/>
            <person name="Larimer F."/>
            <person name="Land M."/>
            <person name="Hauser L."/>
            <person name="Challacombe J.F."/>
            <person name="Green L."/>
            <person name="Lindler L.E."/>
            <person name="Nikolich M.P."/>
            <person name="Richardson P."/>
        </authorList>
    </citation>
    <scope>NUCLEOTIDE SEQUENCE [LARGE SCALE GENOMIC DNA]</scope>
    <source>
        <strain>YPIII</strain>
    </source>
</reference>
<name>MNME_YERPY</name>
<sequence>MSTTDTIVAQATPPGRGGVGILRVSGRAASEVAHAVLGKLPKPRYADYLPFKDVDGSTLDQGIALYFPGPNSFTGEDVLELQGHGGPVILDLLLKRILALPGLRIARPGEFSERAFLNDKLDLAQAEAIADLIDASSEQAARSAVNSLQGAFSARIHQLVEALTHLRIYVEAAIDFPDEEIDFLSDGKIEGQLNGVMADLEQVRTEARQGSLLREGMKVVIAGRPNAGKSSLLNALAGREAAIVTDIAGTTRDVLREHIHIDGMPLHIIDTAGLREANDEVERIGIERAWNEIEQADRVLFMVDGTTTDATEPAAIWPEFMARLPATLPITVVRNKADITGETLGLTEVNGHSLIRLSARTGEGIDLLRDHLKQSMGFTSNTEGGFLARRRHLQALETAARHLIQGHEQLVSAYAGELLAEELRLAQQSLSEITGEFSSDDLLGRIFSSFCIGK</sequence>
<feature type="chain" id="PRO_0000345943" description="tRNA modification GTPase MnmE">
    <location>
        <begin position="1"/>
        <end position="454"/>
    </location>
</feature>
<feature type="domain" description="TrmE-type G">
    <location>
        <begin position="216"/>
        <end position="377"/>
    </location>
</feature>
<feature type="binding site" evidence="1">
    <location>
        <position position="23"/>
    </location>
    <ligand>
        <name>(6S)-5-formyl-5,6,7,8-tetrahydrofolate</name>
        <dbReference type="ChEBI" id="CHEBI:57457"/>
    </ligand>
</feature>
<feature type="binding site" evidence="1">
    <location>
        <position position="80"/>
    </location>
    <ligand>
        <name>(6S)-5-formyl-5,6,7,8-tetrahydrofolate</name>
        <dbReference type="ChEBI" id="CHEBI:57457"/>
    </ligand>
</feature>
<feature type="binding site" evidence="1">
    <location>
        <position position="120"/>
    </location>
    <ligand>
        <name>(6S)-5-formyl-5,6,7,8-tetrahydrofolate</name>
        <dbReference type="ChEBI" id="CHEBI:57457"/>
    </ligand>
</feature>
<feature type="binding site" evidence="1">
    <location>
        <begin position="226"/>
        <end position="231"/>
    </location>
    <ligand>
        <name>GTP</name>
        <dbReference type="ChEBI" id="CHEBI:37565"/>
    </ligand>
</feature>
<feature type="binding site" evidence="1">
    <location>
        <position position="226"/>
    </location>
    <ligand>
        <name>K(+)</name>
        <dbReference type="ChEBI" id="CHEBI:29103"/>
    </ligand>
</feature>
<feature type="binding site" evidence="1">
    <location>
        <position position="230"/>
    </location>
    <ligand>
        <name>Mg(2+)</name>
        <dbReference type="ChEBI" id="CHEBI:18420"/>
    </ligand>
</feature>
<feature type="binding site" evidence="1">
    <location>
        <begin position="245"/>
        <end position="251"/>
    </location>
    <ligand>
        <name>GTP</name>
        <dbReference type="ChEBI" id="CHEBI:37565"/>
    </ligand>
</feature>
<feature type="binding site" evidence="1">
    <location>
        <position position="245"/>
    </location>
    <ligand>
        <name>K(+)</name>
        <dbReference type="ChEBI" id="CHEBI:29103"/>
    </ligand>
</feature>
<feature type="binding site" evidence="1">
    <location>
        <position position="247"/>
    </location>
    <ligand>
        <name>K(+)</name>
        <dbReference type="ChEBI" id="CHEBI:29103"/>
    </ligand>
</feature>
<feature type="binding site" evidence="1">
    <location>
        <position position="250"/>
    </location>
    <ligand>
        <name>K(+)</name>
        <dbReference type="ChEBI" id="CHEBI:29103"/>
    </ligand>
</feature>
<feature type="binding site" evidence="1">
    <location>
        <position position="251"/>
    </location>
    <ligand>
        <name>Mg(2+)</name>
        <dbReference type="ChEBI" id="CHEBI:18420"/>
    </ligand>
</feature>
<feature type="binding site" evidence="1">
    <location>
        <begin position="270"/>
        <end position="273"/>
    </location>
    <ligand>
        <name>GTP</name>
        <dbReference type="ChEBI" id="CHEBI:37565"/>
    </ligand>
</feature>
<feature type="binding site" evidence="1">
    <location>
        <begin position="335"/>
        <end position="338"/>
    </location>
    <ligand>
        <name>GTP</name>
        <dbReference type="ChEBI" id="CHEBI:37565"/>
    </ligand>
</feature>
<feature type="binding site" evidence="1">
    <location>
        <begin position="358"/>
        <end position="360"/>
    </location>
    <ligand>
        <name>GTP</name>
        <dbReference type="ChEBI" id="CHEBI:37565"/>
    </ligand>
</feature>
<feature type="binding site" evidence="1">
    <location>
        <position position="454"/>
    </location>
    <ligand>
        <name>(6S)-5-formyl-5,6,7,8-tetrahydrofolate</name>
        <dbReference type="ChEBI" id="CHEBI:57457"/>
    </ligand>
</feature>
<comment type="function">
    <text evidence="1">Exhibits a very high intrinsic GTPase hydrolysis rate. Involved in the addition of a carboxymethylaminomethyl (cmnm) group at the wobble position (U34) of certain tRNAs, forming tRNA-cmnm(5)s(2)U34.</text>
</comment>
<comment type="cofactor">
    <cofactor evidence="1">
        <name>K(+)</name>
        <dbReference type="ChEBI" id="CHEBI:29103"/>
    </cofactor>
    <text evidence="1">Binds 1 potassium ion per subunit.</text>
</comment>
<comment type="subunit">
    <text evidence="1">Homodimer. Heterotetramer of two MnmE and two MnmG subunits.</text>
</comment>
<comment type="subcellular location">
    <subcellularLocation>
        <location evidence="1">Cytoplasm</location>
    </subcellularLocation>
</comment>
<comment type="similarity">
    <text evidence="1">Belongs to the TRAFAC class TrmE-Era-EngA-EngB-Septin-like GTPase superfamily. TrmE GTPase family.</text>
</comment>